<protein>
    <recommendedName>
        <fullName>Histone H3-3</fullName>
    </recommendedName>
</protein>
<gene>
    <name type="primary">H3-3</name>
</gene>
<sequence length="114" mass="12721">NTGGKAPRKHIAHKQAKKSSAAAATGGVKKPHRFRPGTVALREIRRFQKSTELLIRKLPFQRLVREIASEFKNDLRFQSSAVLALQEASEAYLVGLFEDTNLCAIHAKRVTIMP</sequence>
<name>H33_STYLE</name>
<accession>P81197</accession>
<organism>
    <name type="scientific">Stylonychia lemnae</name>
    <name type="common">Ciliate</name>
    <dbReference type="NCBI Taxonomy" id="5949"/>
    <lineage>
        <taxon>Eukaryota</taxon>
        <taxon>Sar</taxon>
        <taxon>Alveolata</taxon>
        <taxon>Ciliophora</taxon>
        <taxon>Intramacronucleata</taxon>
        <taxon>Spirotrichea</taxon>
        <taxon>Stichotrichia</taxon>
        <taxon>Sporadotrichida</taxon>
        <taxon>Oxytrichidae</taxon>
        <taxon>Stylonychinae</taxon>
        <taxon>Stylonychia</taxon>
    </lineage>
</organism>
<evidence type="ECO:0000250" key="1"/>
<evidence type="ECO:0000256" key="2">
    <source>
        <dbReference type="SAM" id="MobiDB-lite"/>
    </source>
</evidence>
<evidence type="ECO:0000305" key="3"/>
<dbReference type="EMBL" id="Y16629">
    <property type="protein sequence ID" value="CAA76332.1"/>
    <property type="molecule type" value="Genomic_DNA"/>
</dbReference>
<dbReference type="SMR" id="P81197"/>
<dbReference type="GO" id="GO:0000786">
    <property type="term" value="C:nucleosome"/>
    <property type="evidence" value="ECO:0007669"/>
    <property type="project" value="UniProtKB-KW"/>
</dbReference>
<dbReference type="GO" id="GO:0005634">
    <property type="term" value="C:nucleus"/>
    <property type="evidence" value="ECO:0007669"/>
    <property type="project" value="UniProtKB-SubCell"/>
</dbReference>
<dbReference type="GO" id="GO:0003677">
    <property type="term" value="F:DNA binding"/>
    <property type="evidence" value="ECO:0007669"/>
    <property type="project" value="UniProtKB-KW"/>
</dbReference>
<dbReference type="GO" id="GO:0046982">
    <property type="term" value="F:protein heterodimerization activity"/>
    <property type="evidence" value="ECO:0007669"/>
    <property type="project" value="InterPro"/>
</dbReference>
<dbReference type="GO" id="GO:0030527">
    <property type="term" value="F:structural constituent of chromatin"/>
    <property type="evidence" value="ECO:0007669"/>
    <property type="project" value="InterPro"/>
</dbReference>
<dbReference type="CDD" id="cd22911">
    <property type="entry name" value="HFD_H3"/>
    <property type="match status" value="1"/>
</dbReference>
<dbReference type="FunFam" id="1.10.20.10:FF:000001">
    <property type="entry name" value="Histone H3"/>
    <property type="match status" value="1"/>
</dbReference>
<dbReference type="Gene3D" id="1.10.20.10">
    <property type="entry name" value="Histone, subunit A"/>
    <property type="match status" value="1"/>
</dbReference>
<dbReference type="InterPro" id="IPR009072">
    <property type="entry name" value="Histone-fold"/>
</dbReference>
<dbReference type="InterPro" id="IPR007125">
    <property type="entry name" value="Histone_H2A/H2B/H3"/>
</dbReference>
<dbReference type="InterPro" id="IPR000164">
    <property type="entry name" value="Histone_H3/CENP-A"/>
</dbReference>
<dbReference type="PANTHER" id="PTHR11426">
    <property type="entry name" value="HISTONE H3"/>
    <property type="match status" value="1"/>
</dbReference>
<dbReference type="Pfam" id="PF00125">
    <property type="entry name" value="Histone"/>
    <property type="match status" value="1"/>
</dbReference>
<dbReference type="PRINTS" id="PR00622">
    <property type="entry name" value="HISTONEH3"/>
</dbReference>
<dbReference type="SMART" id="SM00428">
    <property type="entry name" value="H3"/>
    <property type="match status" value="1"/>
</dbReference>
<dbReference type="SUPFAM" id="SSF47113">
    <property type="entry name" value="Histone-fold"/>
    <property type="match status" value="1"/>
</dbReference>
<dbReference type="PROSITE" id="PS00322">
    <property type="entry name" value="HISTONE_H3_1"/>
    <property type="match status" value="1"/>
</dbReference>
<dbReference type="PROSITE" id="PS00959">
    <property type="entry name" value="HISTONE_H3_2"/>
    <property type="match status" value="1"/>
</dbReference>
<proteinExistence type="inferred from homology"/>
<feature type="chain" id="PRO_0000221323" description="Histone H3-3">
    <location>
        <begin position="1" status="less than"/>
        <end position="114" status="greater than"/>
    </location>
</feature>
<feature type="region of interest" description="Disordered" evidence="2">
    <location>
        <begin position="1"/>
        <end position="32"/>
    </location>
</feature>
<feature type="compositionally biased region" description="Basic residues" evidence="2">
    <location>
        <begin position="1"/>
        <end position="17"/>
    </location>
</feature>
<feature type="compositionally biased region" description="Low complexity" evidence="2">
    <location>
        <begin position="18"/>
        <end position="28"/>
    </location>
</feature>
<feature type="non-terminal residue">
    <location>
        <position position="1"/>
    </location>
</feature>
<feature type="non-terminal residue">
    <location>
        <position position="114"/>
    </location>
</feature>
<keyword id="KW-0158">Chromosome</keyword>
<keyword id="KW-0238">DNA-binding</keyword>
<keyword id="KW-0544">Nucleosome core</keyword>
<keyword id="KW-0539">Nucleus</keyword>
<reference key="1">
    <citation type="journal article" date="1999" name="FEMS Microbiol. Lett.">
        <title>Several highly divergent histone H3 genes are present in the hypotrichous ciliate Stylonychia lemnae.</title>
        <authorList>
            <person name="Bernhard D."/>
        </authorList>
    </citation>
    <scope>NUCLEOTIDE SEQUENCE [GENOMIC DNA]</scope>
</reference>
<comment type="function">
    <text>Core component of nucleosome. Nucleosomes wrap and compact DNA into chromatin, limiting DNA accessibility to the cellular machineries which require DNA as a template. Histones thereby play a central role in transcription regulation, DNA repair, DNA replication and chromosomal stability. DNA accessibility is regulated via a complex set of post-translational modifications of histones, also called histone code, and nucleosome remodeling.</text>
</comment>
<comment type="subunit">
    <text>The nucleosome is a histone octamer containing two molecules each of H2A, H2B, H3 and H4 assembled in one H3-H4 heterotetramer and two H2A-H2B heterodimers. The octamer wraps approximately 147 bp of DNA.</text>
</comment>
<comment type="subcellular location">
    <subcellularLocation>
        <location evidence="1">Nucleus</location>
    </subcellularLocation>
    <subcellularLocation>
        <location evidence="1">Chromosome</location>
    </subcellularLocation>
</comment>
<comment type="similarity">
    <text evidence="3">Belongs to the histone H3 family.</text>
</comment>